<protein>
    <recommendedName>
        <fullName>Uncharacterized protein R522</fullName>
    </recommendedName>
</protein>
<organism>
    <name type="scientific">Acanthamoeba polyphaga mimivirus</name>
    <name type="common">APMV</name>
    <dbReference type="NCBI Taxonomy" id="212035"/>
    <lineage>
        <taxon>Viruses</taxon>
        <taxon>Varidnaviria</taxon>
        <taxon>Bamfordvirae</taxon>
        <taxon>Nucleocytoviricota</taxon>
        <taxon>Megaviricetes</taxon>
        <taxon>Imitervirales</taxon>
        <taxon>Mimiviridae</taxon>
        <taxon>Megamimivirinae</taxon>
        <taxon>Mimivirus</taxon>
        <taxon>Mimivirus bradfordmassiliense</taxon>
    </lineage>
</organism>
<organismHost>
    <name type="scientific">Acanthamoeba polyphaga</name>
    <name type="common">Amoeba</name>
    <dbReference type="NCBI Taxonomy" id="5757"/>
</organismHost>
<gene>
    <name type="ordered locus">MIMI_R522</name>
</gene>
<dbReference type="EMBL" id="AY653733">
    <property type="protein sequence ID" value="AAV50786.1"/>
    <property type="molecule type" value="Genomic_DNA"/>
</dbReference>
<dbReference type="KEGG" id="vg:9925156"/>
<dbReference type="Proteomes" id="UP000001134">
    <property type="component" value="Genome"/>
</dbReference>
<sequence length="264" mass="31002">MEYIIQEINSSYLIVGYIDDNDPKENFVEQFIDEFIDKHNKNIIADIICLRIVRNPNEIDLYVLCRSNINLKILDSRFKNINDAILHICSDNLFLPFEQVDDYGIISLLNNRTNIETGTITMLGKKLNYSLIKTESVDKTWLEGSYLELIKRKFIESPFITFETISDAIEYDDKKEDIITLKQYIMIYNDKTITNPENRLQYAVFSDSKGFLIFDDNREFNQIFNNHINYIVHSESSDEEDNDDDIINNDTNNDINNDDIEIKT</sequence>
<proteinExistence type="predicted"/>
<evidence type="ECO:0000256" key="1">
    <source>
        <dbReference type="SAM" id="MobiDB-lite"/>
    </source>
</evidence>
<feature type="chain" id="PRO_0000253441" description="Uncharacterized protein R522">
    <location>
        <begin position="1"/>
        <end position="264"/>
    </location>
</feature>
<feature type="region of interest" description="Disordered" evidence="1">
    <location>
        <begin position="235"/>
        <end position="264"/>
    </location>
</feature>
<feature type="compositionally biased region" description="Acidic residues" evidence="1">
    <location>
        <begin position="237"/>
        <end position="247"/>
    </location>
</feature>
<accession>Q5UQ87</accession>
<keyword id="KW-1185">Reference proteome</keyword>
<name>YR522_MIMIV</name>
<reference key="1">
    <citation type="journal article" date="2004" name="Science">
        <title>The 1.2-megabase genome sequence of Mimivirus.</title>
        <authorList>
            <person name="Raoult D."/>
            <person name="Audic S."/>
            <person name="Robert C."/>
            <person name="Abergel C."/>
            <person name="Renesto P."/>
            <person name="Ogata H."/>
            <person name="La Scola B."/>
            <person name="Susan M."/>
            <person name="Claverie J.-M."/>
        </authorList>
    </citation>
    <scope>NUCLEOTIDE SEQUENCE [LARGE SCALE GENOMIC DNA]</scope>
    <source>
        <strain>Rowbotham-Bradford</strain>
    </source>
</reference>